<comment type="function">
    <text evidence="1">Part of the Sec protein translocase complex. Interacts with the SecYEG preprotein conducting channel. Has a central role in coupling the hydrolysis of ATP to the transfer of proteins into and across the cell membrane, serving as an ATP-driven molecular motor driving the stepwise translocation of polypeptide chains across the membrane.</text>
</comment>
<comment type="function">
    <text evidence="1">Probably participates in protein translocation into and across both the cytoplasmic and thylakoid membranes in cyanobacterial cells.</text>
</comment>
<comment type="catalytic activity">
    <reaction evidence="1">
        <text>ATP + H2O + cellular proteinSide 1 = ADP + phosphate + cellular proteinSide 2.</text>
        <dbReference type="EC" id="7.4.2.8"/>
    </reaction>
</comment>
<comment type="subunit">
    <text evidence="1">Monomer and homodimer. Part of the essential Sec protein translocation apparatus which comprises SecA, SecYEG and auxiliary proteins SecDF. Other proteins may also be involved.</text>
</comment>
<comment type="subcellular location">
    <subcellularLocation>
        <location evidence="1">Cell inner membrane</location>
        <topology evidence="1">Peripheral membrane protein</topology>
        <orientation evidence="1">Cytoplasmic side</orientation>
    </subcellularLocation>
    <subcellularLocation>
        <location evidence="1">Cellular thylakoid membrane</location>
        <topology evidence="1">Peripheral membrane protein</topology>
        <orientation evidence="1">Cytoplasmic side</orientation>
    </subcellularLocation>
    <subcellularLocation>
        <location evidence="1">Cytoplasm</location>
    </subcellularLocation>
</comment>
<comment type="similarity">
    <text evidence="1">Belongs to the SecA family.</text>
</comment>
<gene>
    <name evidence="1" type="primary">secA</name>
    <name type="ordered locus">MAE_31960</name>
</gene>
<protein>
    <recommendedName>
        <fullName evidence="1">Protein translocase subunit SecA</fullName>
        <ecNumber evidence="1">7.4.2.8</ecNumber>
    </recommendedName>
</protein>
<proteinExistence type="inferred from homology"/>
<feature type="chain" id="PRO_1000145034" description="Protein translocase subunit SecA">
    <location>
        <begin position="1"/>
        <end position="938"/>
    </location>
</feature>
<feature type="binding site" evidence="1">
    <location>
        <position position="90"/>
    </location>
    <ligand>
        <name>ATP</name>
        <dbReference type="ChEBI" id="CHEBI:30616"/>
    </ligand>
</feature>
<feature type="binding site" evidence="1">
    <location>
        <begin position="108"/>
        <end position="112"/>
    </location>
    <ligand>
        <name>ATP</name>
        <dbReference type="ChEBI" id="CHEBI:30616"/>
    </ligand>
</feature>
<feature type="binding site" evidence="1">
    <location>
        <position position="504"/>
    </location>
    <ligand>
        <name>ATP</name>
        <dbReference type="ChEBI" id="CHEBI:30616"/>
    </ligand>
</feature>
<name>SECA_MICAN</name>
<reference key="1">
    <citation type="journal article" date="2007" name="DNA Res.">
        <title>Complete genomic structure of the bloom-forming toxic cyanobacterium Microcystis aeruginosa NIES-843.</title>
        <authorList>
            <person name="Kaneko T."/>
            <person name="Nakajima N."/>
            <person name="Okamoto S."/>
            <person name="Suzuki I."/>
            <person name="Tanabe Y."/>
            <person name="Tamaoki M."/>
            <person name="Nakamura Y."/>
            <person name="Kasai F."/>
            <person name="Watanabe A."/>
            <person name="Kawashima K."/>
            <person name="Kishida Y."/>
            <person name="Ono A."/>
            <person name="Shimizu Y."/>
            <person name="Takahashi C."/>
            <person name="Minami C."/>
            <person name="Fujishiro T."/>
            <person name="Kohara M."/>
            <person name="Katoh M."/>
            <person name="Nakazaki N."/>
            <person name="Nakayama S."/>
            <person name="Yamada M."/>
            <person name="Tabata S."/>
            <person name="Watanabe M.M."/>
        </authorList>
    </citation>
    <scope>NUCLEOTIDE SEQUENCE [LARGE SCALE GENOMIC DNA]</scope>
    <source>
        <strain>NIES-843 / IAM M-247</strain>
    </source>
</reference>
<organism>
    <name type="scientific">Microcystis aeruginosa (strain NIES-843 / IAM M-2473)</name>
    <dbReference type="NCBI Taxonomy" id="449447"/>
    <lineage>
        <taxon>Bacteria</taxon>
        <taxon>Bacillati</taxon>
        <taxon>Cyanobacteriota</taxon>
        <taxon>Cyanophyceae</taxon>
        <taxon>Oscillatoriophycideae</taxon>
        <taxon>Chroococcales</taxon>
        <taxon>Microcystaceae</taxon>
        <taxon>Microcystis</taxon>
    </lineage>
</organism>
<dbReference type="EC" id="7.4.2.8" evidence="1"/>
<dbReference type="EMBL" id="AP009552">
    <property type="protein sequence ID" value="BAG03018.1"/>
    <property type="molecule type" value="Genomic_DNA"/>
</dbReference>
<dbReference type="RefSeq" id="WP_012266145.1">
    <property type="nucleotide sequence ID" value="NC_010296.1"/>
</dbReference>
<dbReference type="SMR" id="B0JLJ4"/>
<dbReference type="STRING" id="449447.MAE_31960"/>
<dbReference type="PaxDb" id="449447-MAE_31960"/>
<dbReference type="EnsemblBacteria" id="BAG03018">
    <property type="protein sequence ID" value="BAG03018"/>
    <property type="gene ID" value="MAE_31960"/>
</dbReference>
<dbReference type="KEGG" id="mar:MAE_31960"/>
<dbReference type="PATRIC" id="fig|449447.4.peg.2897"/>
<dbReference type="eggNOG" id="COG0653">
    <property type="taxonomic scope" value="Bacteria"/>
</dbReference>
<dbReference type="HOGENOM" id="CLU_005314_3_0_3"/>
<dbReference type="BioCyc" id="MAER449447:MAE_RS13850-MONOMER"/>
<dbReference type="Proteomes" id="UP000001510">
    <property type="component" value="Chromosome"/>
</dbReference>
<dbReference type="GO" id="GO:0031522">
    <property type="term" value="C:cell envelope Sec protein transport complex"/>
    <property type="evidence" value="ECO:0007669"/>
    <property type="project" value="TreeGrafter"/>
</dbReference>
<dbReference type="GO" id="GO:0005829">
    <property type="term" value="C:cytosol"/>
    <property type="evidence" value="ECO:0007669"/>
    <property type="project" value="TreeGrafter"/>
</dbReference>
<dbReference type="GO" id="GO:0031676">
    <property type="term" value="C:plasma membrane-derived thylakoid membrane"/>
    <property type="evidence" value="ECO:0007669"/>
    <property type="project" value="UniProtKB-SubCell"/>
</dbReference>
<dbReference type="GO" id="GO:0005524">
    <property type="term" value="F:ATP binding"/>
    <property type="evidence" value="ECO:0007669"/>
    <property type="project" value="UniProtKB-UniRule"/>
</dbReference>
<dbReference type="GO" id="GO:0008564">
    <property type="term" value="F:protein-exporting ATPase activity"/>
    <property type="evidence" value="ECO:0007669"/>
    <property type="project" value="UniProtKB-EC"/>
</dbReference>
<dbReference type="GO" id="GO:0065002">
    <property type="term" value="P:intracellular protein transmembrane transport"/>
    <property type="evidence" value="ECO:0007669"/>
    <property type="project" value="UniProtKB-UniRule"/>
</dbReference>
<dbReference type="GO" id="GO:0017038">
    <property type="term" value="P:protein import"/>
    <property type="evidence" value="ECO:0007669"/>
    <property type="project" value="InterPro"/>
</dbReference>
<dbReference type="GO" id="GO:0006605">
    <property type="term" value="P:protein targeting"/>
    <property type="evidence" value="ECO:0007669"/>
    <property type="project" value="UniProtKB-UniRule"/>
</dbReference>
<dbReference type="GO" id="GO:0043952">
    <property type="term" value="P:protein transport by the Sec complex"/>
    <property type="evidence" value="ECO:0007669"/>
    <property type="project" value="TreeGrafter"/>
</dbReference>
<dbReference type="CDD" id="cd17928">
    <property type="entry name" value="DEXDc_SecA"/>
    <property type="match status" value="1"/>
</dbReference>
<dbReference type="CDD" id="cd18803">
    <property type="entry name" value="SF2_C_secA"/>
    <property type="match status" value="1"/>
</dbReference>
<dbReference type="FunFam" id="3.90.1440.10:FF:000003">
    <property type="entry name" value="Preprotein translocase SecA subunit"/>
    <property type="match status" value="1"/>
</dbReference>
<dbReference type="FunFam" id="3.40.50.300:FF:000429">
    <property type="entry name" value="Preprotein translocase subunit SecA"/>
    <property type="match status" value="1"/>
</dbReference>
<dbReference type="FunFam" id="1.10.3060.10:FF:000003">
    <property type="entry name" value="Protein translocase subunit SecA"/>
    <property type="match status" value="1"/>
</dbReference>
<dbReference type="FunFam" id="3.40.50.300:FF:000334">
    <property type="entry name" value="Protein translocase subunit SecA"/>
    <property type="match status" value="1"/>
</dbReference>
<dbReference type="Gene3D" id="1.10.3060.10">
    <property type="entry name" value="Helical scaffold and wing domains of SecA"/>
    <property type="match status" value="1"/>
</dbReference>
<dbReference type="Gene3D" id="3.40.50.300">
    <property type="entry name" value="P-loop containing nucleotide triphosphate hydrolases"/>
    <property type="match status" value="2"/>
</dbReference>
<dbReference type="Gene3D" id="3.90.1440.10">
    <property type="entry name" value="SecA, preprotein cross-linking domain"/>
    <property type="match status" value="1"/>
</dbReference>
<dbReference type="HAMAP" id="MF_01382">
    <property type="entry name" value="SecA"/>
    <property type="match status" value="1"/>
</dbReference>
<dbReference type="InterPro" id="IPR014001">
    <property type="entry name" value="Helicase_ATP-bd"/>
</dbReference>
<dbReference type="InterPro" id="IPR027417">
    <property type="entry name" value="P-loop_NTPase"/>
</dbReference>
<dbReference type="InterPro" id="IPR000185">
    <property type="entry name" value="SecA"/>
</dbReference>
<dbReference type="InterPro" id="IPR020937">
    <property type="entry name" value="SecA_CS"/>
</dbReference>
<dbReference type="InterPro" id="IPR011115">
    <property type="entry name" value="SecA_DEAD"/>
</dbReference>
<dbReference type="InterPro" id="IPR014018">
    <property type="entry name" value="SecA_motor_DEAD"/>
</dbReference>
<dbReference type="InterPro" id="IPR011130">
    <property type="entry name" value="SecA_preprotein_X-link_dom"/>
</dbReference>
<dbReference type="InterPro" id="IPR044722">
    <property type="entry name" value="SecA_SF2_C"/>
</dbReference>
<dbReference type="InterPro" id="IPR011116">
    <property type="entry name" value="SecA_Wing/Scaffold"/>
</dbReference>
<dbReference type="InterPro" id="IPR036266">
    <property type="entry name" value="SecA_Wing/Scaffold_sf"/>
</dbReference>
<dbReference type="InterPro" id="IPR036670">
    <property type="entry name" value="SecA_X-link_sf"/>
</dbReference>
<dbReference type="NCBIfam" id="TIGR00963">
    <property type="entry name" value="secA"/>
    <property type="match status" value="1"/>
</dbReference>
<dbReference type="PANTHER" id="PTHR30612:SF0">
    <property type="entry name" value="CHLOROPLAST PROTEIN-TRANSPORTING ATPASE"/>
    <property type="match status" value="1"/>
</dbReference>
<dbReference type="PANTHER" id="PTHR30612">
    <property type="entry name" value="SECA INNER MEMBRANE COMPONENT OF SEC PROTEIN SECRETION SYSTEM"/>
    <property type="match status" value="1"/>
</dbReference>
<dbReference type="Pfam" id="PF21090">
    <property type="entry name" value="P-loop_SecA"/>
    <property type="match status" value="1"/>
</dbReference>
<dbReference type="Pfam" id="PF07517">
    <property type="entry name" value="SecA_DEAD"/>
    <property type="match status" value="1"/>
</dbReference>
<dbReference type="Pfam" id="PF01043">
    <property type="entry name" value="SecA_PP_bind"/>
    <property type="match status" value="1"/>
</dbReference>
<dbReference type="Pfam" id="PF07516">
    <property type="entry name" value="SecA_SW"/>
    <property type="match status" value="1"/>
</dbReference>
<dbReference type="PRINTS" id="PR00906">
    <property type="entry name" value="SECA"/>
</dbReference>
<dbReference type="SMART" id="SM00957">
    <property type="entry name" value="SecA_DEAD"/>
    <property type="match status" value="1"/>
</dbReference>
<dbReference type="SMART" id="SM00958">
    <property type="entry name" value="SecA_PP_bind"/>
    <property type="match status" value="1"/>
</dbReference>
<dbReference type="SUPFAM" id="SSF81886">
    <property type="entry name" value="Helical scaffold and wing domains of SecA"/>
    <property type="match status" value="1"/>
</dbReference>
<dbReference type="SUPFAM" id="SSF52540">
    <property type="entry name" value="P-loop containing nucleoside triphosphate hydrolases"/>
    <property type="match status" value="2"/>
</dbReference>
<dbReference type="SUPFAM" id="SSF81767">
    <property type="entry name" value="Pre-protein crosslinking domain of SecA"/>
    <property type="match status" value="1"/>
</dbReference>
<dbReference type="PROSITE" id="PS01312">
    <property type="entry name" value="SECA"/>
    <property type="match status" value="1"/>
</dbReference>
<dbReference type="PROSITE" id="PS51196">
    <property type="entry name" value="SECA_MOTOR_DEAD"/>
    <property type="match status" value="1"/>
</dbReference>
<accession>B0JLJ4</accession>
<keyword id="KW-0067">ATP-binding</keyword>
<keyword id="KW-0997">Cell inner membrane</keyword>
<keyword id="KW-1003">Cell membrane</keyword>
<keyword id="KW-0963">Cytoplasm</keyword>
<keyword id="KW-0472">Membrane</keyword>
<keyword id="KW-0547">Nucleotide-binding</keyword>
<keyword id="KW-0653">Protein transport</keyword>
<keyword id="KW-0793">Thylakoid</keyword>
<keyword id="KW-1278">Translocase</keyword>
<keyword id="KW-0811">Translocation</keyword>
<keyword id="KW-0813">Transport</keyword>
<sequence length="938" mass="107146">MLKALLGDPNARKIKKFQPLVTEINLLEEDIKNLSDEELRSKTSEFKERLDKARNYDEREEILEEILPEAFAIVREAGIRVLGMRHFDVQLLGGMVLHKGQIAEMKTGEGKTLVATLPAYLNGLTGKGVHVVTVNDYLARRDAEWMGQVHRFLGLSVGLIQAGMSPEERKKNYACDITYTTNSELGFDYLRDNMATVMGEVVQRPFNYCVIDEVDSILIDEARTPLIISGPIDRPTEKYILAAEIAKQLVRQKVEDGPGDYEVNEKDRNVLMTDEGFKRAEELLGVTDLYDQENPWAHYISNAIRAKELQKKDVNYIVRSGEIVIVDEFTGRVLPGRRWGDGLHQAVEAKEGVEIQQETQTLATITYQNFFLLYPKLSGMTGTAKTEETELEKVYNLQVTIIPTNRVSRRQDLADVVYKNEQAKWNAVAEECQQMHEQGRPVLVGTTSVEKSEVLSLLLQGRNIPHNLLNARPENVERESEIVAQAGRAGAVTIATNMAGRGTDIILGGNSDYMARLKIREYLMPKLVMPEDDNLAFSLPSLGERNRPQGFAPGKKKKNWRASAEIFPTELPKEVENALKEAVKFAVDTHGTQSLPELEVEEKIAIAAEKAPTDDPVIQKLREVYKLIRKSYEDYTGKEHDEVVERGGLHVIGTERHESRRIDNQLRGRAGRQGDPGSTHFFLSLEDNLLRIFGGDRVAGLMDAFRVEEDMPIESGMLTRSLEGAQRKVETFYYDARKQVFEYDEVMNNQRRAIYAERRRVLEGMDLKEQVLQYAEKTMDEIVMAYVNPELPAEEWDLEKLISKSQEFVYLLADITAKDVEEMSVNDIKMFLHEEVRKAYEIKERQVDSIRAGLMRDAERYFILQQIDMLWREHLQAMEALRESIGLRGYGQKDPLIEYKQEGYEMFLEMMIDIRRNVVYSLFQFQPQGQPQAVASEQ</sequence>
<evidence type="ECO:0000255" key="1">
    <source>
        <dbReference type="HAMAP-Rule" id="MF_01382"/>
    </source>
</evidence>